<evidence type="ECO:0000256" key="1">
    <source>
        <dbReference type="SAM" id="MobiDB-lite"/>
    </source>
</evidence>
<evidence type="ECO:0000305" key="2"/>
<evidence type="ECO:0007829" key="3">
    <source>
        <dbReference type="PDB" id="3LLZ"/>
    </source>
</evidence>
<reference key="1">
    <citation type="journal article" date="1989" name="Arch. Biochem. Biophys.">
        <title>Homology of the D-galactose-specific lectins from Artocarpus integrifolia and Maclura pomifera and the role of an unusual small polypeptide subunit.</title>
        <authorList>
            <person name="Young N.M."/>
            <person name="Johnston R.A.Z."/>
            <person name="Szabo A.G."/>
            <person name="Watson D.C."/>
        </authorList>
    </citation>
    <scope>PROTEIN SEQUENCE</scope>
    <source>
        <tissue>Seed</tissue>
    </source>
</reference>
<reference key="2">
    <citation type="journal article" date="1998" name="J. Biol. Chem.">
        <title>Structure of the complex of Maclura pomifera agglutinin and the T-antigen disaccharide, Galbeta1,3GalNAc.</title>
        <authorList>
            <person name="Lee X."/>
            <person name="Thompson A."/>
            <person name="Zhang Z."/>
            <person name="Ton-That H."/>
            <person name="Biesterfeldt J."/>
            <person name="Ogata C."/>
            <person name="Xu L."/>
            <person name="Johnston R.A."/>
            <person name="Young N.M."/>
        </authorList>
    </citation>
    <scope>X-RAY CRYSTALLOGRAPHY (2.2 ANGSTROMS)</scope>
</reference>
<comment type="function">
    <text>D-galactose-specific lectin, binds the T-antigen structure Gal-beta1,3-GalNAc.</text>
</comment>
<comment type="subunit">
    <text>Formed of four alpha chains and four beta chains.</text>
</comment>
<comment type="similarity">
    <text evidence="2">Belongs to the jacalin lectin family.</text>
</comment>
<accession>P18676</accession>
<organism>
    <name type="scientific">Maclura pomifera</name>
    <name type="common">Osage orange</name>
    <name type="synonym">Ioxylon pomiferum</name>
    <dbReference type="NCBI Taxonomy" id="3496"/>
    <lineage>
        <taxon>Eukaryota</taxon>
        <taxon>Viridiplantae</taxon>
        <taxon>Streptophyta</taxon>
        <taxon>Embryophyta</taxon>
        <taxon>Tracheophyta</taxon>
        <taxon>Spermatophyta</taxon>
        <taxon>Magnoliopsida</taxon>
        <taxon>eudicotyledons</taxon>
        <taxon>Gunneridae</taxon>
        <taxon>Pentapetalae</taxon>
        <taxon>rosids</taxon>
        <taxon>fabids</taxon>
        <taxon>Rosales</taxon>
        <taxon>Moraceae</taxon>
        <taxon>Chlorophoreae</taxon>
        <taxon>Maclura</taxon>
    </lineage>
</organism>
<proteinExistence type="evidence at protein level"/>
<name>LECB2_MACPO</name>
<sequence length="20" mass="2141">GRNGKSQSIIVGPWGDRVTN</sequence>
<protein>
    <recommendedName>
        <fullName>Agglutinin beta-2 chain</fullName>
    </recommendedName>
    <alternativeName>
        <fullName>MPA</fullName>
    </alternativeName>
</protein>
<dbReference type="PIR" id="S03987">
    <property type="entry name" value="S03987"/>
</dbReference>
<dbReference type="PDB" id="1JOT">
    <property type="method" value="X-ray"/>
    <property type="resolution" value="2.20 A"/>
    <property type="chains" value="B=1-20"/>
</dbReference>
<dbReference type="PDB" id="3LLY">
    <property type="method" value="X-ray"/>
    <property type="resolution" value="2.25 A"/>
    <property type="chains" value="B=1-16"/>
</dbReference>
<dbReference type="PDB" id="3LLZ">
    <property type="method" value="X-ray"/>
    <property type="resolution" value="1.55 A"/>
    <property type="chains" value="B=3-16"/>
</dbReference>
<dbReference type="PDB" id="3LM1">
    <property type="method" value="X-ray"/>
    <property type="resolution" value="2.10 A"/>
    <property type="chains" value="B/D/F/H/J/L/N/P=2-16"/>
</dbReference>
<dbReference type="PDBsum" id="1JOT"/>
<dbReference type="PDBsum" id="3LLY"/>
<dbReference type="PDBsum" id="3LLZ"/>
<dbReference type="PDBsum" id="3LM1"/>
<dbReference type="SMR" id="P18676"/>
<dbReference type="UniLectin" id="P18676"/>
<dbReference type="EvolutionaryTrace" id="P18676"/>
<dbReference type="GO" id="GO:0030246">
    <property type="term" value="F:carbohydrate binding"/>
    <property type="evidence" value="ECO:0007669"/>
    <property type="project" value="UniProtKB-KW"/>
</dbReference>
<keyword id="KW-0002">3D-structure</keyword>
<keyword id="KW-0903">Direct protein sequencing</keyword>
<keyword id="KW-0430">Lectin</keyword>
<feature type="peptide" id="PRO_0000044036" description="Agglutinin beta-2 chain">
    <location>
        <begin position="1"/>
        <end position="20"/>
    </location>
</feature>
<feature type="region of interest" description="Disordered" evidence="1">
    <location>
        <begin position="1"/>
        <end position="20"/>
    </location>
</feature>
<feature type="strand" evidence="3">
    <location>
        <begin position="9"/>
        <end position="14"/>
    </location>
</feature>